<comment type="function">
    <text evidence="2">Component of the cytochrome c oxidase, the last enzyme in the mitochondrial electron transport chain which drives oxidative phosphorylation. The respiratory chain contains 3 multisubunit complexes succinate dehydrogenase (complex II, CII), ubiquinol-cytochrome c oxidoreductase (cytochrome b-c1 complex, complex III, CIII) and cytochrome c oxidase (complex IV, CIV), that cooperate to transfer electrons derived from NADH and succinate to molecular oxygen, creating an electrochemical gradient over the inner membrane that drives transmembrane transport and the ATP synthase. Cytochrome c oxidase is the component of the respiratory chain that catalyzes the reduction of oxygen to water. Electrons originating from reduced cytochrome c in the intermembrane space (IMS) are transferred via the dinuclear copper A center (CU(A)) of subunit 2 and heme A of subunit 1 to the active site in subunit 1, a binuclear center (BNC) formed by heme A3 and copper B (CU(B)). The BNC reduces molecular oxygen to 2 water molecules using 4 electrons from cytochrome c in the IMS and 4 protons from the mitochondrial matrix.</text>
</comment>
<comment type="catalytic activity">
    <reaction evidence="2">
        <text>4 Fe(II)-[cytochrome c] + O2 + 8 H(+)(in) = 4 Fe(III)-[cytochrome c] + 2 H2O + 4 H(+)(out)</text>
        <dbReference type="Rhea" id="RHEA:11436"/>
        <dbReference type="Rhea" id="RHEA-COMP:10350"/>
        <dbReference type="Rhea" id="RHEA-COMP:14399"/>
        <dbReference type="ChEBI" id="CHEBI:15377"/>
        <dbReference type="ChEBI" id="CHEBI:15378"/>
        <dbReference type="ChEBI" id="CHEBI:15379"/>
        <dbReference type="ChEBI" id="CHEBI:29033"/>
        <dbReference type="ChEBI" id="CHEBI:29034"/>
        <dbReference type="EC" id="7.1.1.9"/>
    </reaction>
    <physiologicalReaction direction="left-to-right" evidence="2">
        <dbReference type="Rhea" id="RHEA:11437"/>
    </physiologicalReaction>
</comment>
<comment type="cofactor">
    <cofactor evidence="3">
        <name>Cu cation</name>
        <dbReference type="ChEBI" id="CHEBI:23378"/>
    </cofactor>
    <text evidence="3">Binds a dinuclear copper A center per subunit.</text>
</comment>
<comment type="subunit">
    <text evidence="1 3">Component of the cytochrome c oxidase (complex IV, CIV), a multisubunit enzyme composed of 14 subunits. The complex is composed of a catalytic core of 3 subunits MT-CO1, MT-CO2 and MT-CO3, encoded in the mitochondrial DNA, and 11 supernumerary subunits COX4I, COX5A, COX5B, COX6A, COX6B, COX6C, COX7A, COX7B, COX7C, COX8 and NDUFA4, which are encoded in the nuclear genome. The complex exists as a monomer or a dimer and forms supercomplexes (SCs) in the inner mitochondrial membrane with NADH-ubiquinone oxidoreductase (complex I, CI) and ubiquinol-cytochrome c oxidoreductase (cytochrome b-c1 complex, complex III, CIII), resulting in different assemblies (supercomplex SCI(1)III(2)IV(1) and megacomplex MCI(2)III(2)IV(2)) (By similarity). Found in a complex with TMEM177, COA6, COX18, COX20, SCO1 and SCO2. Interacts with TMEM177 in a COX20-dependent manner. Interacts with COX20. Interacts with COX16 (By similarity).</text>
</comment>
<comment type="subcellular location">
    <subcellularLocation>
        <location evidence="3">Mitochondrion inner membrane</location>
        <topology evidence="3">Multi-pass membrane protein</topology>
    </subcellularLocation>
</comment>
<comment type="similarity">
    <text evidence="4">Belongs to the cytochrome c oxidase subunit 2 family.</text>
</comment>
<accession>Q38S59</accession>
<geneLocation type="mitochondrion"/>
<feature type="chain" id="PRO_0000254933" description="Cytochrome c oxidase subunit 2">
    <location>
        <begin position="1"/>
        <end position="228"/>
    </location>
</feature>
<feature type="topological domain" description="Mitochondrial intermembrane" evidence="3">
    <location>
        <begin position="1"/>
        <end position="14"/>
    </location>
</feature>
<feature type="transmembrane region" description="Helical; Name=I" evidence="3">
    <location>
        <begin position="15"/>
        <end position="45"/>
    </location>
</feature>
<feature type="topological domain" description="Mitochondrial matrix" evidence="3">
    <location>
        <begin position="46"/>
        <end position="59"/>
    </location>
</feature>
<feature type="transmembrane region" description="Helical; Name=II" evidence="3">
    <location>
        <begin position="60"/>
        <end position="87"/>
    </location>
</feature>
<feature type="topological domain" description="Mitochondrial intermembrane" evidence="3">
    <location>
        <begin position="88"/>
        <end position="228"/>
    </location>
</feature>
<feature type="binding site" evidence="3">
    <location>
        <position position="161"/>
    </location>
    <ligand>
        <name>Cu cation</name>
        <dbReference type="ChEBI" id="CHEBI:23378"/>
        <label>A1</label>
    </ligand>
</feature>
<feature type="binding site" evidence="3">
    <location>
        <position position="196"/>
    </location>
    <ligand>
        <name>Cu cation</name>
        <dbReference type="ChEBI" id="CHEBI:23378"/>
        <label>A1</label>
    </ligand>
</feature>
<feature type="binding site" evidence="3">
    <location>
        <position position="196"/>
    </location>
    <ligand>
        <name>Cu cation</name>
        <dbReference type="ChEBI" id="CHEBI:23378"/>
        <label>A2</label>
    </ligand>
</feature>
<feature type="binding site" evidence="3">
    <location>
        <position position="198"/>
    </location>
    <ligand>
        <name>Cu cation</name>
        <dbReference type="ChEBI" id="CHEBI:23378"/>
        <label>A2</label>
    </ligand>
</feature>
<feature type="binding site" evidence="3">
    <location>
        <position position="198"/>
    </location>
    <ligand>
        <name>Mg(2+)</name>
        <dbReference type="ChEBI" id="CHEBI:18420"/>
        <note>ligand shared with MT-CO1</note>
    </ligand>
</feature>
<feature type="binding site" evidence="3">
    <location>
        <position position="200"/>
    </location>
    <ligand>
        <name>Cu cation</name>
        <dbReference type="ChEBI" id="CHEBI:23378"/>
        <label>A1</label>
    </ligand>
</feature>
<feature type="binding site" evidence="3">
    <location>
        <position position="200"/>
    </location>
    <ligand>
        <name>Cu cation</name>
        <dbReference type="ChEBI" id="CHEBI:23378"/>
        <label>A2</label>
    </ligand>
</feature>
<feature type="binding site" evidence="3">
    <location>
        <position position="204"/>
    </location>
    <ligand>
        <name>Cu cation</name>
        <dbReference type="ChEBI" id="CHEBI:23378"/>
        <label>A2</label>
    </ligand>
</feature>
<feature type="binding site" evidence="3">
    <location>
        <position position="207"/>
    </location>
    <ligand>
        <name>Cu cation</name>
        <dbReference type="ChEBI" id="CHEBI:23378"/>
        <label>A1</label>
    </ligand>
</feature>
<name>COX2_MERSH</name>
<evidence type="ECO:0000250" key="1">
    <source>
        <dbReference type="UniProtKB" id="P00403"/>
    </source>
</evidence>
<evidence type="ECO:0000250" key="2">
    <source>
        <dbReference type="UniProtKB" id="P00410"/>
    </source>
</evidence>
<evidence type="ECO:0000250" key="3">
    <source>
        <dbReference type="UniProtKB" id="P68530"/>
    </source>
</evidence>
<evidence type="ECO:0000305" key="4"/>
<proteinExistence type="inferred from homology"/>
<sequence length="228" mass="26002">MAYPLQLGLQDASSPIMEELTNFHDHTLMIVFLISSLVLYLISLMLTTKLIHTSTMDAQEVETIWTILPAIILILIALPSLRILYMMDEINNPVLTVKTMGHQWYWSYEYTDYEDLCFDSYMTPTNELKPGELRLLEVDNRVVLPMELPIRMLISSEDVLHSWAVPSLGLKTDAIPGRLNQATVTSNRPGVFYGQCSEICGSNHSFMPIVLEMIPLKLFENWSVSMTQ</sequence>
<protein>
    <recommendedName>
        <fullName>Cytochrome c oxidase subunit 2</fullName>
        <ecNumber>7.1.1.9</ecNumber>
    </recommendedName>
    <alternativeName>
        <fullName>Cytochrome c oxidase polypeptide II</fullName>
    </alternativeName>
</protein>
<dbReference type="EC" id="7.1.1.9"/>
<dbReference type="EMBL" id="DQ019083">
    <property type="protein sequence ID" value="ABA28341.1"/>
    <property type="molecule type" value="Genomic_DNA"/>
</dbReference>
<dbReference type="SMR" id="Q38S59"/>
<dbReference type="GO" id="GO:0005743">
    <property type="term" value="C:mitochondrial inner membrane"/>
    <property type="evidence" value="ECO:0007669"/>
    <property type="project" value="UniProtKB-SubCell"/>
</dbReference>
<dbReference type="GO" id="GO:0045277">
    <property type="term" value="C:respiratory chain complex IV"/>
    <property type="evidence" value="ECO:0000250"/>
    <property type="project" value="UniProtKB"/>
</dbReference>
<dbReference type="GO" id="GO:0005507">
    <property type="term" value="F:copper ion binding"/>
    <property type="evidence" value="ECO:0007669"/>
    <property type="project" value="InterPro"/>
</dbReference>
<dbReference type="GO" id="GO:0004129">
    <property type="term" value="F:cytochrome-c oxidase activity"/>
    <property type="evidence" value="ECO:0007669"/>
    <property type="project" value="UniProtKB-EC"/>
</dbReference>
<dbReference type="GO" id="GO:0042773">
    <property type="term" value="P:ATP synthesis coupled electron transport"/>
    <property type="evidence" value="ECO:0007669"/>
    <property type="project" value="TreeGrafter"/>
</dbReference>
<dbReference type="CDD" id="cd13912">
    <property type="entry name" value="CcO_II_C"/>
    <property type="match status" value="1"/>
</dbReference>
<dbReference type="FunFam" id="1.10.287.90:FF:000001">
    <property type="entry name" value="Cytochrome c oxidase subunit 2"/>
    <property type="match status" value="1"/>
</dbReference>
<dbReference type="FunFam" id="2.60.40.420:FF:000001">
    <property type="entry name" value="Cytochrome c oxidase subunit 2"/>
    <property type="match status" value="1"/>
</dbReference>
<dbReference type="Gene3D" id="1.10.287.90">
    <property type="match status" value="1"/>
</dbReference>
<dbReference type="Gene3D" id="2.60.40.420">
    <property type="entry name" value="Cupredoxins - blue copper proteins"/>
    <property type="match status" value="1"/>
</dbReference>
<dbReference type="InterPro" id="IPR045187">
    <property type="entry name" value="CcO_II"/>
</dbReference>
<dbReference type="InterPro" id="IPR002429">
    <property type="entry name" value="CcO_II-like_C"/>
</dbReference>
<dbReference type="InterPro" id="IPR034210">
    <property type="entry name" value="CcO_II_C"/>
</dbReference>
<dbReference type="InterPro" id="IPR001505">
    <property type="entry name" value="Copper_CuA"/>
</dbReference>
<dbReference type="InterPro" id="IPR008972">
    <property type="entry name" value="Cupredoxin"/>
</dbReference>
<dbReference type="InterPro" id="IPR014222">
    <property type="entry name" value="Cyt_c_oxidase_su2"/>
</dbReference>
<dbReference type="InterPro" id="IPR011759">
    <property type="entry name" value="Cyt_c_oxidase_su2_TM_dom"/>
</dbReference>
<dbReference type="InterPro" id="IPR036257">
    <property type="entry name" value="Cyt_c_oxidase_su2_TM_sf"/>
</dbReference>
<dbReference type="NCBIfam" id="TIGR02866">
    <property type="entry name" value="CoxB"/>
    <property type="match status" value="1"/>
</dbReference>
<dbReference type="PANTHER" id="PTHR22888:SF9">
    <property type="entry name" value="CYTOCHROME C OXIDASE SUBUNIT 2"/>
    <property type="match status" value="1"/>
</dbReference>
<dbReference type="PANTHER" id="PTHR22888">
    <property type="entry name" value="CYTOCHROME C OXIDASE, SUBUNIT II"/>
    <property type="match status" value="1"/>
</dbReference>
<dbReference type="Pfam" id="PF00116">
    <property type="entry name" value="COX2"/>
    <property type="match status" value="1"/>
</dbReference>
<dbReference type="Pfam" id="PF02790">
    <property type="entry name" value="COX2_TM"/>
    <property type="match status" value="1"/>
</dbReference>
<dbReference type="PRINTS" id="PR01166">
    <property type="entry name" value="CYCOXIDASEII"/>
</dbReference>
<dbReference type="SUPFAM" id="SSF49503">
    <property type="entry name" value="Cupredoxins"/>
    <property type="match status" value="1"/>
</dbReference>
<dbReference type="SUPFAM" id="SSF81464">
    <property type="entry name" value="Cytochrome c oxidase subunit II-like, transmembrane region"/>
    <property type="match status" value="1"/>
</dbReference>
<dbReference type="PROSITE" id="PS00078">
    <property type="entry name" value="COX2"/>
    <property type="match status" value="1"/>
</dbReference>
<dbReference type="PROSITE" id="PS50857">
    <property type="entry name" value="COX2_CUA"/>
    <property type="match status" value="1"/>
</dbReference>
<dbReference type="PROSITE" id="PS50999">
    <property type="entry name" value="COX2_TM"/>
    <property type="match status" value="1"/>
</dbReference>
<reference key="1">
    <citation type="journal article" date="2005" name="Mol. Phylogenet. Evol.">
        <title>Multigene phylogeny of the Old World mice, Murinae, reveals distinct geographic lineages and the declining utility of mitochondrial genes compared to nuclear genes.</title>
        <authorList>
            <person name="Steppan S.J."/>
            <person name="Adkins R.M."/>
            <person name="Spinks P.Q."/>
            <person name="Hale C."/>
        </authorList>
    </citation>
    <scope>NUCLEOTIDE SEQUENCE [GENOMIC DNA]</scope>
</reference>
<keyword id="KW-0186">Copper</keyword>
<keyword id="KW-0249">Electron transport</keyword>
<keyword id="KW-0460">Magnesium</keyword>
<keyword id="KW-0472">Membrane</keyword>
<keyword id="KW-0479">Metal-binding</keyword>
<keyword id="KW-0496">Mitochondrion</keyword>
<keyword id="KW-0999">Mitochondrion inner membrane</keyword>
<keyword id="KW-0679">Respiratory chain</keyword>
<keyword id="KW-1278">Translocase</keyword>
<keyword id="KW-0812">Transmembrane</keyword>
<keyword id="KW-1133">Transmembrane helix</keyword>
<keyword id="KW-0813">Transport</keyword>
<organism>
    <name type="scientific">Meriones shawi</name>
    <name type="common">Shaw's jird</name>
    <dbReference type="NCBI Taxonomy" id="37435"/>
    <lineage>
        <taxon>Eukaryota</taxon>
        <taxon>Metazoa</taxon>
        <taxon>Chordata</taxon>
        <taxon>Craniata</taxon>
        <taxon>Vertebrata</taxon>
        <taxon>Euteleostomi</taxon>
        <taxon>Mammalia</taxon>
        <taxon>Eutheria</taxon>
        <taxon>Euarchontoglires</taxon>
        <taxon>Glires</taxon>
        <taxon>Rodentia</taxon>
        <taxon>Myomorpha</taxon>
        <taxon>Muroidea</taxon>
        <taxon>Muridae</taxon>
        <taxon>Gerbillinae</taxon>
        <taxon>Meriones</taxon>
    </lineage>
</organism>
<gene>
    <name type="primary">MT-CO2</name>
    <name type="synonym">COII</name>
    <name type="synonym">COX2</name>
    <name type="synonym">COXII</name>
    <name type="synonym">MTCO2</name>
</gene>